<protein>
    <recommendedName>
        <fullName evidence="2">Conotoxin Cal6.1f</fullName>
    </recommendedName>
</protein>
<reference key="1">
    <citation type="journal article" date="2011" name="Toxicon">
        <title>Diversity of conotoxin types from Conus californicus reflects a diversity of prey types and a novel evolutionary history.</title>
        <authorList>
            <person name="Elliger C.A."/>
            <person name="Richmond T.A."/>
            <person name="Lebaric Z.N."/>
            <person name="Pierce N.T."/>
            <person name="Sweedler J.V."/>
            <person name="Gilly W.F."/>
        </authorList>
    </citation>
    <scope>NUCLEOTIDE SEQUENCE [MRNA]</scope>
    <source>
        <tissue>Venom duct</tissue>
    </source>
</reference>
<evidence type="ECO:0000250" key="1"/>
<evidence type="ECO:0000303" key="2">
    <source>
    </source>
</evidence>
<evidence type="ECO:0000305" key="3"/>
<evidence type="ECO:0000305" key="4">
    <source>
    </source>
</evidence>
<feature type="propeptide" id="PRO_5000566324" evidence="4">
    <location>
        <begin position="1" status="less than"/>
        <end position="8"/>
    </location>
</feature>
<feature type="peptide" id="PRO_5000566325" description="Conotoxin Cal6.1f" evidence="4">
    <location>
        <begin position="9"/>
        <end position="35"/>
    </location>
</feature>
<feature type="disulfide bond" evidence="1">
    <location>
        <begin position="9"/>
        <end position="25"/>
    </location>
</feature>
<feature type="disulfide bond" evidence="1">
    <location>
        <begin position="16"/>
        <end position="29"/>
    </location>
</feature>
<feature type="disulfide bond" evidence="1">
    <location>
        <begin position="24"/>
        <end position="34"/>
    </location>
</feature>
<feature type="non-terminal residue">
    <location>
        <position position="1"/>
    </location>
</feature>
<accession>D2Y4A0</accession>
<proteinExistence type="evidence at transcript level"/>
<dbReference type="EMBL" id="GU306165">
    <property type="protein sequence ID" value="ADB04243.1"/>
    <property type="molecule type" value="mRNA"/>
</dbReference>
<dbReference type="SMR" id="D2Y4A0"/>
<dbReference type="ConoServer" id="3974">
    <property type="toxin name" value="Cal6.1f precursor"/>
</dbReference>
<dbReference type="GO" id="GO:0005576">
    <property type="term" value="C:extracellular region"/>
    <property type="evidence" value="ECO:0007669"/>
    <property type="project" value="UniProtKB-SubCell"/>
</dbReference>
<dbReference type="GO" id="GO:0099106">
    <property type="term" value="F:ion channel regulator activity"/>
    <property type="evidence" value="ECO:0007669"/>
    <property type="project" value="UniProtKB-KW"/>
</dbReference>
<dbReference type="GO" id="GO:0090729">
    <property type="term" value="F:toxin activity"/>
    <property type="evidence" value="ECO:0007669"/>
    <property type="project" value="UniProtKB-KW"/>
</dbReference>
<keyword id="KW-0165">Cleavage on pair of basic residues</keyword>
<keyword id="KW-1015">Disulfide bond</keyword>
<keyword id="KW-0872">Ion channel impairing toxin</keyword>
<keyword id="KW-0960">Knottin</keyword>
<keyword id="KW-0528">Neurotoxin</keyword>
<keyword id="KW-0964">Secreted</keyword>
<keyword id="KW-0800">Toxin</keyword>
<sequence>GLIRPSKRCIGGGDPCEFHRPYTCCSGYCIVFVCA</sequence>
<comment type="function">
    <text evidence="3">Probable neurotoxin with unknown target. Possibly targets ion channels.</text>
</comment>
<comment type="subcellular location">
    <subcellularLocation>
        <location evidence="4">Secreted</location>
    </subcellularLocation>
</comment>
<comment type="tissue specificity">
    <text evidence="4">Expressed by the venom duct.</text>
</comment>
<comment type="domain">
    <text evidence="1">The presence of a 'disulfide through disulfide knot' structurally defines this protein as a knottin.</text>
</comment>
<comment type="domain">
    <text>The cysteine framework is VI/VII (C-C-CC-C-C).</text>
</comment>
<comment type="similarity">
    <text evidence="3">Belongs to the conotoxin O1 superfamily.</text>
</comment>
<name>O161F_CONCL</name>
<organism>
    <name type="scientific">Californiconus californicus</name>
    <name type="common">California cone</name>
    <name type="synonym">Conus californicus</name>
    <dbReference type="NCBI Taxonomy" id="1736779"/>
    <lineage>
        <taxon>Eukaryota</taxon>
        <taxon>Metazoa</taxon>
        <taxon>Spiralia</taxon>
        <taxon>Lophotrochozoa</taxon>
        <taxon>Mollusca</taxon>
        <taxon>Gastropoda</taxon>
        <taxon>Caenogastropoda</taxon>
        <taxon>Neogastropoda</taxon>
        <taxon>Conoidea</taxon>
        <taxon>Conidae</taxon>
        <taxon>Californiconus</taxon>
    </lineage>
</organism>